<dbReference type="EMBL" id="AB024024">
    <property type="protein sequence ID" value="BAA98118.1"/>
    <property type="molecule type" value="Genomic_DNA"/>
</dbReference>
<dbReference type="EMBL" id="CP002688">
    <property type="protein sequence ID" value="AED95143.1"/>
    <property type="molecule type" value="Genomic_DNA"/>
</dbReference>
<dbReference type="EMBL" id="AK226434">
    <property type="protein sequence ID" value="BAE98577.1"/>
    <property type="molecule type" value="mRNA"/>
</dbReference>
<dbReference type="EMBL" id="AY086105">
    <property type="protein sequence ID" value="AAM63312.1"/>
    <property type="molecule type" value="mRNA"/>
</dbReference>
<dbReference type="RefSeq" id="NP_568637.1">
    <property type="nucleotide sequence ID" value="NM_123832.2"/>
</dbReference>
<dbReference type="SMR" id="Q9LU01"/>
<dbReference type="FunCoup" id="Q9LU01">
    <property type="interactions" value="1670"/>
</dbReference>
<dbReference type="IntAct" id="Q9LU01">
    <property type="interactions" value="12"/>
</dbReference>
<dbReference type="STRING" id="3702.Q9LU01"/>
<dbReference type="PaxDb" id="3702-AT5G44650.1"/>
<dbReference type="ProteomicsDB" id="242900"/>
<dbReference type="EnsemblPlants" id="AT5G44650.1">
    <property type="protein sequence ID" value="AT5G44650.1"/>
    <property type="gene ID" value="AT5G44650"/>
</dbReference>
<dbReference type="GeneID" id="834494"/>
<dbReference type="Gramene" id="AT5G44650.1">
    <property type="protein sequence ID" value="AT5G44650.1"/>
    <property type="gene ID" value="AT5G44650"/>
</dbReference>
<dbReference type="KEGG" id="ath:AT5G44650"/>
<dbReference type="Araport" id="AT5G44650"/>
<dbReference type="TAIR" id="AT5G44650">
    <property type="gene designation" value="CEST"/>
</dbReference>
<dbReference type="eggNOG" id="ENOG502QRUJ">
    <property type="taxonomic scope" value="Eukaryota"/>
</dbReference>
<dbReference type="HOGENOM" id="CLU_083736_0_0_1"/>
<dbReference type="InParanoid" id="Q9LU01"/>
<dbReference type="OMA" id="KRLNVDW"/>
<dbReference type="OrthoDB" id="2018626at2759"/>
<dbReference type="PhylomeDB" id="Q9LU01"/>
<dbReference type="PRO" id="PR:Q9LU01"/>
<dbReference type="Proteomes" id="UP000006548">
    <property type="component" value="Chromosome 5"/>
</dbReference>
<dbReference type="ExpressionAtlas" id="Q9LU01">
    <property type="expression patterns" value="baseline and differential"/>
</dbReference>
<dbReference type="GO" id="GO:0009507">
    <property type="term" value="C:chloroplast"/>
    <property type="evidence" value="ECO:0000314"/>
    <property type="project" value="TAIR"/>
</dbReference>
<dbReference type="GO" id="GO:0009535">
    <property type="term" value="C:chloroplast thylakoid membrane"/>
    <property type="evidence" value="ECO:0007005"/>
    <property type="project" value="TAIR"/>
</dbReference>
<dbReference type="GO" id="GO:0009579">
    <property type="term" value="C:thylakoid"/>
    <property type="evidence" value="ECO:0007005"/>
    <property type="project" value="TAIR"/>
</dbReference>
<dbReference type="GO" id="GO:0009658">
    <property type="term" value="P:chloroplast organization"/>
    <property type="evidence" value="ECO:0000315"/>
    <property type="project" value="TAIR"/>
</dbReference>
<dbReference type="GO" id="GO:0010286">
    <property type="term" value="P:heat acclimation"/>
    <property type="evidence" value="ECO:0000315"/>
    <property type="project" value="TAIR"/>
</dbReference>
<dbReference type="GO" id="GO:0042538">
    <property type="term" value="P:hyperosmotic salinity response"/>
    <property type="evidence" value="ECO:0000315"/>
    <property type="project" value="TAIR"/>
</dbReference>
<dbReference type="GO" id="GO:0048564">
    <property type="term" value="P:photosystem I assembly"/>
    <property type="evidence" value="ECO:0000315"/>
    <property type="project" value="TAIR"/>
</dbReference>
<dbReference type="GO" id="GO:0080183">
    <property type="term" value="P:response to photooxidative stress"/>
    <property type="evidence" value="ECO:0000315"/>
    <property type="project" value="TAIR"/>
</dbReference>
<dbReference type="GO" id="GO:0009414">
    <property type="term" value="P:response to water deprivation"/>
    <property type="evidence" value="ECO:0000315"/>
    <property type="project" value="TAIR"/>
</dbReference>
<dbReference type="InterPro" id="IPR040340">
    <property type="entry name" value="CEST/Y3IP1"/>
</dbReference>
<dbReference type="PANTHER" id="PTHR33672">
    <property type="entry name" value="YCF3-INTERACTING PROTEIN 1, CHLOROPLASTIC"/>
    <property type="match status" value="1"/>
</dbReference>
<dbReference type="PANTHER" id="PTHR33672:SF3">
    <property type="entry name" value="YCF3-INTERACTING PROTEIN 1, CHLOROPLASTIC"/>
    <property type="match status" value="1"/>
</dbReference>
<sequence length="280" mass="31816">MTTQIFQLPLKYCASSFSSTGQRNYGASSSPSPIVICKSNGISDGLWVKRRKNNRRFGSLIVKQEKGDVTEIRVPVPLTLEQQEKEKQNRDDEEDEIDEGDVDPEDLKYVNEIKRVIELLRRNRDMIFSEVKLTIMIEDPRELERRRLLGIEDADTPSRDDLAEALEQVNDGKIPKDRATLRMLHEEMIRWPNLEVEVSKKQRGKSMYAKSTDTGIDPKEAAKRLNVEWDSAAAIEEVDVDDEQGVVTKVAGYGALYFVSALPVIIGISVVLILFYNSLQ</sequence>
<evidence type="ECO:0000255" key="1"/>
<evidence type="ECO:0000256" key="2">
    <source>
        <dbReference type="SAM" id="MobiDB-lite"/>
    </source>
</evidence>
<evidence type="ECO:0000269" key="3">
    <source>
    </source>
</evidence>
<evidence type="ECO:0000269" key="4">
    <source>
    </source>
</evidence>
<evidence type="ECO:0000303" key="5">
    <source>
    </source>
</evidence>
<evidence type="ECO:0000303" key="6">
    <source>
    </source>
</evidence>
<evidence type="ECO:0000305" key="7"/>
<evidence type="ECO:0000305" key="8">
    <source>
    </source>
</evidence>
<evidence type="ECO:0000305" key="9">
    <source>
    </source>
</evidence>
<evidence type="ECO:0000312" key="10">
    <source>
        <dbReference type="Araport" id="AT5G44650"/>
    </source>
</evidence>
<comment type="function">
    <text evidence="3 4">Nuclear genome-encoded factor that participates in photosystem I (PSI) biogenesis. Cooperates with the plastid genome-encoded protein PSI assembly Ycf3 in the assembly of stable PSI units in the thylakoid membrane (PubMed:20807881). Involved in light-induced chloroplast development and growth. Involved in the plant response to abiotic and photooxidative stresses. May be involved in the suppression of photooxidative damage (PubMed:20876334).</text>
</comment>
<comment type="subunit">
    <text evidence="3">Interacts with Ycf3.</text>
</comment>
<comment type="subcellular location">
    <subcellularLocation>
        <location evidence="8 9">Plastid</location>
        <location evidence="8 9">Chloroplast thylakoid membrane</location>
        <topology evidence="1">Single-pass membrane protein</topology>
    </subcellularLocation>
</comment>
<comment type="tissue specificity">
    <text evidence="4">Expressed in cotyledons, rosette and cauline leaves, stems and sepals.</text>
</comment>
<comment type="miscellaneous">
    <text evidence="3 4">Plants silencing Y3IP1 can grow autotrophically on soil, but show a light-green phenotype, very slow growth and delayed development (PubMed:20807881, PubMed:20876334). Plants over-expressing Y3IP1 show enhanced resistance to salt, drought and heat stresses, and treatment with paraquat (PubMed:20876334).</text>
</comment>
<comment type="similarity">
    <text evidence="7">Belongs to the Y3IP1/CEST family.</text>
</comment>
<accession>Q9LU01</accession>
<accession>Q8LDA8</accession>
<reference key="1">
    <citation type="submission" date="1999-02" db="EMBL/GenBank/DDBJ databases">
        <title>Structural analysis of Arabidopsis thaliana chromosome 5. XI.</title>
        <authorList>
            <person name="Kaneko T."/>
            <person name="Katoh T."/>
            <person name="Asamizu E."/>
            <person name="Sato S."/>
            <person name="Nakamura Y."/>
            <person name="Kotani H."/>
            <person name="Tabata S."/>
        </authorList>
    </citation>
    <scope>NUCLEOTIDE SEQUENCE [LARGE SCALE GENOMIC DNA]</scope>
    <source>
        <strain>cv. Columbia</strain>
    </source>
</reference>
<reference key="2">
    <citation type="journal article" date="2017" name="Plant J.">
        <title>Araport11: a complete reannotation of the Arabidopsis thaliana reference genome.</title>
        <authorList>
            <person name="Cheng C.Y."/>
            <person name="Krishnakumar V."/>
            <person name="Chan A.P."/>
            <person name="Thibaud-Nissen F."/>
            <person name="Schobel S."/>
            <person name="Town C.D."/>
        </authorList>
    </citation>
    <scope>GENOME REANNOTATION</scope>
    <source>
        <strain>cv. Columbia</strain>
    </source>
</reference>
<reference key="3">
    <citation type="submission" date="2006-07" db="EMBL/GenBank/DDBJ databases">
        <title>Large-scale analysis of RIKEN Arabidopsis full-length (RAFL) cDNAs.</title>
        <authorList>
            <person name="Totoki Y."/>
            <person name="Seki M."/>
            <person name="Ishida J."/>
            <person name="Nakajima M."/>
            <person name="Enju A."/>
            <person name="Kamiya A."/>
            <person name="Narusaka M."/>
            <person name="Shin-i T."/>
            <person name="Nakagawa M."/>
            <person name="Sakamoto N."/>
            <person name="Oishi K."/>
            <person name="Kohara Y."/>
            <person name="Kobayashi M."/>
            <person name="Toyoda A."/>
            <person name="Sakaki Y."/>
            <person name="Sakurai T."/>
            <person name="Iida K."/>
            <person name="Akiyama K."/>
            <person name="Satou M."/>
            <person name="Toyoda T."/>
            <person name="Konagaya A."/>
            <person name="Carninci P."/>
            <person name="Kawai J."/>
            <person name="Hayashizaki Y."/>
            <person name="Shinozaki K."/>
        </authorList>
    </citation>
    <scope>NUCLEOTIDE SEQUENCE [LARGE SCALE MRNA]</scope>
    <source>
        <strain>cv. Columbia</strain>
    </source>
</reference>
<reference key="4">
    <citation type="submission" date="2002-03" db="EMBL/GenBank/DDBJ databases">
        <title>Full-length cDNA from Arabidopsis thaliana.</title>
        <authorList>
            <person name="Brover V.V."/>
            <person name="Troukhan M.E."/>
            <person name="Alexandrov N.A."/>
            <person name="Lu Y.-P."/>
            <person name="Flavell R.B."/>
            <person name="Feldmann K.A."/>
        </authorList>
    </citation>
    <scope>NUCLEOTIDE SEQUENCE [LARGE SCALE MRNA]</scope>
</reference>
<reference key="5">
    <citation type="journal article" date="2010" name="Plant Cell">
        <title>Y3IP1, a nucleus-encoded thylakoid protein, cooperates with the plastid-encoded Ycf3 protein in photosystem I assembly of tobacco and Arabidopsis.</title>
        <authorList>
            <person name="Albus C.A."/>
            <person name="Ruf S."/>
            <person name="Schottler M.A."/>
            <person name="Lein W."/>
            <person name="Kehr J."/>
            <person name="Bock R."/>
        </authorList>
    </citation>
    <scope>FUNCTION</scope>
    <scope>INTERACTION WITH YCF3</scope>
    <scope>SUBCELLULAR LOCATION</scope>
</reference>
<reference key="6">
    <citation type="journal article" date="2011" name="J. Exp. Bot.">
        <title>A novel chloroplast protein, CEST induces tolerance to multiple environmental stresses and reduces photooxidative damage in transgenic Arabidopsis.</title>
        <authorList>
            <person name="Yokotani N."/>
            <person name="Higuchi M."/>
            <person name="Kondou Y."/>
            <person name="Ichikawa T."/>
            <person name="Iwabuchi M."/>
            <person name="Hirochika H."/>
            <person name="Matsui M."/>
            <person name="Oda K."/>
        </authorList>
    </citation>
    <scope>FUNCTION</scope>
    <scope>SUBCELLULAR LOCATION</scope>
    <scope>TISSUE SPECIFICITY</scope>
</reference>
<feature type="transit peptide" description="Chloroplast" evidence="1">
    <location>
        <begin position="1"/>
        <end position="62"/>
    </location>
</feature>
<feature type="chain" id="PRO_0000433221" description="Ycf3-interacting protein 1, chloroplastic" evidence="1">
    <location>
        <begin position="63"/>
        <end position="280"/>
    </location>
</feature>
<feature type="transmembrane region" description="Helical" evidence="1">
    <location>
        <begin position="255"/>
        <end position="275"/>
    </location>
</feature>
<feature type="region of interest" description="Disordered" evidence="2">
    <location>
        <begin position="75"/>
        <end position="103"/>
    </location>
</feature>
<feature type="compositionally biased region" description="Acidic residues" evidence="2">
    <location>
        <begin position="91"/>
        <end position="103"/>
    </location>
</feature>
<feature type="sequence conflict" description="In Ref. 4; AAM63312." evidence="7" ref="4">
    <original>P</original>
    <variation>S</variation>
    <location>
        <position position="75"/>
    </location>
</feature>
<organism>
    <name type="scientific">Arabidopsis thaliana</name>
    <name type="common">Mouse-ear cress</name>
    <dbReference type="NCBI Taxonomy" id="3702"/>
    <lineage>
        <taxon>Eukaryota</taxon>
        <taxon>Viridiplantae</taxon>
        <taxon>Streptophyta</taxon>
        <taxon>Embryophyta</taxon>
        <taxon>Tracheophyta</taxon>
        <taxon>Spermatophyta</taxon>
        <taxon>Magnoliopsida</taxon>
        <taxon>eudicotyledons</taxon>
        <taxon>Gunneridae</taxon>
        <taxon>Pentapetalae</taxon>
        <taxon>rosids</taxon>
        <taxon>malvids</taxon>
        <taxon>Brassicales</taxon>
        <taxon>Brassicaceae</taxon>
        <taxon>Camelineae</taxon>
        <taxon>Arabidopsis</taxon>
    </lineage>
</organism>
<name>Y3IP1_ARATH</name>
<gene>
    <name evidence="5" type="primary">Y3IP1</name>
    <name evidence="6" type="synonym">CEST</name>
    <name evidence="10" type="ordered locus">At5g44650</name>
</gene>
<protein>
    <recommendedName>
        <fullName evidence="5">Ycf3-interacting protein 1, chloroplastic</fullName>
    </recommendedName>
    <alternativeName>
        <fullName evidence="6">Protein CHLOROPLAST ENHANCING STRESS TOLERANCE</fullName>
        <shortName evidence="6">AtCEST</shortName>
    </alternativeName>
</protein>
<keyword id="KW-0143">Chaperone</keyword>
<keyword id="KW-0150">Chloroplast</keyword>
<keyword id="KW-0472">Membrane</keyword>
<keyword id="KW-0934">Plastid</keyword>
<keyword id="KW-1185">Reference proteome</keyword>
<keyword id="KW-0346">Stress response</keyword>
<keyword id="KW-0793">Thylakoid</keyword>
<keyword id="KW-0809">Transit peptide</keyword>
<keyword id="KW-0812">Transmembrane</keyword>
<keyword id="KW-1133">Transmembrane helix</keyword>
<proteinExistence type="evidence at protein level"/>